<keyword id="KW-0067">ATP-binding</keyword>
<keyword id="KW-0324">Glycolysis</keyword>
<keyword id="KW-0418">Kinase</keyword>
<keyword id="KW-0547">Nucleotide-binding</keyword>
<keyword id="KW-0808">Transferase</keyword>
<evidence type="ECO:0000250" key="1">
    <source>
        <dbReference type="UniProtKB" id="A0A0K0JFP3"/>
    </source>
</evidence>
<evidence type="ECO:0000255" key="2"/>
<evidence type="ECO:0000255" key="3">
    <source>
        <dbReference type="PROSITE-ProRule" id="PRU01084"/>
    </source>
</evidence>
<evidence type="ECO:0000305" key="4"/>
<proteinExistence type="evidence at transcript level"/>
<comment type="function">
    <text evidence="1">Catalyzes the phosphorylation of various hexoses to hexose 6-phosphate.</text>
</comment>
<comment type="catalytic activity">
    <reaction evidence="1 3">
        <text>a D-hexose + ATP = a D-hexose 6-phosphate + ADP + H(+)</text>
        <dbReference type="Rhea" id="RHEA:22740"/>
        <dbReference type="ChEBI" id="CHEBI:4194"/>
        <dbReference type="ChEBI" id="CHEBI:15378"/>
        <dbReference type="ChEBI" id="CHEBI:30616"/>
        <dbReference type="ChEBI" id="CHEBI:229467"/>
        <dbReference type="ChEBI" id="CHEBI:456216"/>
        <dbReference type="EC" id="2.7.1.1"/>
    </reaction>
    <physiologicalReaction direction="left-to-right" evidence="1">
        <dbReference type="Rhea" id="RHEA:22741"/>
    </physiologicalReaction>
</comment>
<comment type="catalytic activity">
    <reaction evidence="1">
        <text>D-mannose + ATP = D-mannose 6-phosphate + ADP + H(+)</text>
        <dbReference type="Rhea" id="RHEA:11028"/>
        <dbReference type="ChEBI" id="CHEBI:4208"/>
        <dbReference type="ChEBI" id="CHEBI:15378"/>
        <dbReference type="ChEBI" id="CHEBI:30616"/>
        <dbReference type="ChEBI" id="CHEBI:58735"/>
        <dbReference type="ChEBI" id="CHEBI:456216"/>
        <dbReference type="EC" id="2.7.1.1"/>
    </reaction>
    <physiologicalReaction direction="left-to-right" evidence="1">
        <dbReference type="Rhea" id="RHEA:11029"/>
    </physiologicalReaction>
</comment>
<comment type="catalytic activity">
    <reaction evidence="1">
        <text>D-fructose + ATP = D-fructose 6-phosphate + ADP + H(+)</text>
        <dbReference type="Rhea" id="RHEA:16125"/>
        <dbReference type="ChEBI" id="CHEBI:15378"/>
        <dbReference type="ChEBI" id="CHEBI:30616"/>
        <dbReference type="ChEBI" id="CHEBI:37721"/>
        <dbReference type="ChEBI" id="CHEBI:61527"/>
        <dbReference type="ChEBI" id="CHEBI:456216"/>
        <dbReference type="EC" id="2.7.1.1"/>
    </reaction>
    <physiologicalReaction direction="left-to-right" evidence="1">
        <dbReference type="Rhea" id="RHEA:16126"/>
    </physiologicalReaction>
</comment>
<comment type="catalytic activity">
    <reaction evidence="1">
        <text>D-glucose + ATP = D-glucose 6-phosphate + ADP + H(+)</text>
        <dbReference type="Rhea" id="RHEA:17825"/>
        <dbReference type="ChEBI" id="CHEBI:4167"/>
        <dbReference type="ChEBI" id="CHEBI:15378"/>
        <dbReference type="ChEBI" id="CHEBI:30616"/>
        <dbReference type="ChEBI" id="CHEBI:61548"/>
        <dbReference type="ChEBI" id="CHEBI:456216"/>
        <dbReference type="EC" id="2.7.1.1"/>
    </reaction>
    <physiologicalReaction direction="left-to-right" evidence="1">
        <dbReference type="Rhea" id="RHEA:17826"/>
    </physiologicalReaction>
</comment>
<comment type="pathway">
    <text evidence="1">Carbohydrate metabolism; hexose metabolism.</text>
</comment>
<comment type="pathway">
    <text evidence="1">Carbohydrate degradation; glycolysis; D-glyceraldehyde 3-phosphate and glycerone phosphate from D-glucose: step 1/4.</text>
</comment>
<comment type="similarity">
    <text evidence="3 4">Belongs to the hexokinase family.</text>
</comment>
<protein>
    <recommendedName>
        <fullName>Hexokinase</fullName>
        <ecNumber evidence="1">2.7.1.1</ecNumber>
    </recommendedName>
</protein>
<dbReference type="EC" id="2.7.1.1" evidence="1"/>
<dbReference type="EMBL" id="AB049736">
    <property type="protein sequence ID" value="BAB55664.1"/>
    <property type="molecule type" value="mRNA"/>
</dbReference>
<dbReference type="SMR" id="Q969A8"/>
<dbReference type="ChEMBL" id="CHEMBL4739860"/>
<dbReference type="VEuPathDB" id="ToxoDB:TGARI_265450"/>
<dbReference type="VEuPathDB" id="ToxoDB:TGCAST_265450"/>
<dbReference type="VEuPathDB" id="ToxoDB:TGCOUG_265450"/>
<dbReference type="VEuPathDB" id="ToxoDB:TGDOM2_265450"/>
<dbReference type="VEuPathDB" id="ToxoDB:TGFOU_265450"/>
<dbReference type="VEuPathDB" id="ToxoDB:TGGT1_265450"/>
<dbReference type="VEuPathDB" id="ToxoDB:TGMAS_265450"/>
<dbReference type="VEuPathDB" id="ToxoDB:TGME49_265450"/>
<dbReference type="VEuPathDB" id="ToxoDB:TGP89_265450"/>
<dbReference type="VEuPathDB" id="ToxoDB:TGPRC2_265450"/>
<dbReference type="VEuPathDB" id="ToxoDB:TGRH88_012030"/>
<dbReference type="VEuPathDB" id="ToxoDB:TGRUB_265450"/>
<dbReference type="VEuPathDB" id="ToxoDB:TGVAND_265450"/>
<dbReference type="VEuPathDB" id="ToxoDB:TGVEG_265450"/>
<dbReference type="SABIO-RK" id="Q969A8"/>
<dbReference type="UniPathway" id="UPA00109">
    <property type="reaction ID" value="UER00180"/>
</dbReference>
<dbReference type="UniPathway" id="UPA00242"/>
<dbReference type="GO" id="GO:0005829">
    <property type="term" value="C:cytosol"/>
    <property type="evidence" value="ECO:0007669"/>
    <property type="project" value="TreeGrafter"/>
</dbReference>
<dbReference type="GO" id="GO:0005739">
    <property type="term" value="C:mitochondrion"/>
    <property type="evidence" value="ECO:0007669"/>
    <property type="project" value="TreeGrafter"/>
</dbReference>
<dbReference type="GO" id="GO:0005524">
    <property type="term" value="F:ATP binding"/>
    <property type="evidence" value="ECO:0007669"/>
    <property type="project" value="UniProtKB-KW"/>
</dbReference>
<dbReference type="GO" id="GO:0005536">
    <property type="term" value="F:D-glucose binding"/>
    <property type="evidence" value="ECO:0007669"/>
    <property type="project" value="InterPro"/>
</dbReference>
<dbReference type="GO" id="GO:0008865">
    <property type="term" value="F:fructokinase activity"/>
    <property type="evidence" value="ECO:0007669"/>
    <property type="project" value="TreeGrafter"/>
</dbReference>
<dbReference type="GO" id="GO:0004340">
    <property type="term" value="F:glucokinase activity"/>
    <property type="evidence" value="ECO:0007669"/>
    <property type="project" value="TreeGrafter"/>
</dbReference>
<dbReference type="GO" id="GO:0019158">
    <property type="term" value="F:mannokinase activity"/>
    <property type="evidence" value="ECO:0007669"/>
    <property type="project" value="RHEA"/>
</dbReference>
<dbReference type="GO" id="GO:0006006">
    <property type="term" value="P:glucose metabolic process"/>
    <property type="evidence" value="ECO:0007669"/>
    <property type="project" value="TreeGrafter"/>
</dbReference>
<dbReference type="GO" id="GO:0006096">
    <property type="term" value="P:glycolytic process"/>
    <property type="evidence" value="ECO:0007669"/>
    <property type="project" value="UniProtKB-UniPathway"/>
</dbReference>
<dbReference type="GO" id="GO:0001678">
    <property type="term" value="P:intracellular glucose homeostasis"/>
    <property type="evidence" value="ECO:0007669"/>
    <property type="project" value="InterPro"/>
</dbReference>
<dbReference type="CDD" id="cd24000">
    <property type="entry name" value="ASKHA_NBD_HK"/>
    <property type="match status" value="1"/>
</dbReference>
<dbReference type="Gene3D" id="3.30.420.40">
    <property type="match status" value="1"/>
</dbReference>
<dbReference type="Gene3D" id="3.40.367.20">
    <property type="match status" value="1"/>
</dbReference>
<dbReference type="InterPro" id="IPR043129">
    <property type="entry name" value="ATPase_NBD"/>
</dbReference>
<dbReference type="InterPro" id="IPR001312">
    <property type="entry name" value="Hexokinase"/>
</dbReference>
<dbReference type="InterPro" id="IPR019807">
    <property type="entry name" value="Hexokinase_BS"/>
</dbReference>
<dbReference type="InterPro" id="IPR022673">
    <property type="entry name" value="Hexokinase_C"/>
</dbReference>
<dbReference type="InterPro" id="IPR022672">
    <property type="entry name" value="Hexokinase_N"/>
</dbReference>
<dbReference type="PANTHER" id="PTHR19443">
    <property type="entry name" value="HEXOKINASE"/>
    <property type="match status" value="1"/>
</dbReference>
<dbReference type="PANTHER" id="PTHR19443:SF16">
    <property type="entry name" value="HEXOKINASE TYPE 1-RELATED"/>
    <property type="match status" value="1"/>
</dbReference>
<dbReference type="Pfam" id="PF00349">
    <property type="entry name" value="Hexokinase_1"/>
    <property type="match status" value="1"/>
</dbReference>
<dbReference type="Pfam" id="PF03727">
    <property type="entry name" value="Hexokinase_2"/>
    <property type="match status" value="1"/>
</dbReference>
<dbReference type="PRINTS" id="PR00475">
    <property type="entry name" value="HEXOKINASE"/>
</dbReference>
<dbReference type="SUPFAM" id="SSF53067">
    <property type="entry name" value="Actin-like ATPase domain"/>
    <property type="match status" value="2"/>
</dbReference>
<dbReference type="PROSITE" id="PS00378">
    <property type="entry name" value="HEXOKINASE_1"/>
    <property type="match status" value="1"/>
</dbReference>
<dbReference type="PROSITE" id="PS51748">
    <property type="entry name" value="HEXOKINASE_2"/>
    <property type="match status" value="1"/>
</dbReference>
<gene>
    <name type="primary">HXK</name>
</gene>
<reference key="1">
    <citation type="submission" date="2000-10" db="EMBL/GenBank/DDBJ databases">
        <title>Hexokinase.</title>
        <authorList>
            <person name="Saito T."/>
        </authorList>
    </citation>
    <scope>NUCLEOTIDE SEQUENCE [MRNA]</scope>
</reference>
<organism>
    <name type="scientific">Toxoplasma gondii</name>
    <dbReference type="NCBI Taxonomy" id="5811"/>
    <lineage>
        <taxon>Eukaryota</taxon>
        <taxon>Sar</taxon>
        <taxon>Alveolata</taxon>
        <taxon>Apicomplexa</taxon>
        <taxon>Conoidasida</taxon>
        <taxon>Coccidia</taxon>
        <taxon>Eucoccidiorida</taxon>
        <taxon>Eimeriorina</taxon>
        <taxon>Sarcocystidae</taxon>
        <taxon>Toxoplasma</taxon>
    </lineage>
</organism>
<accession>Q969A8</accession>
<name>HXK_TOXGO</name>
<sequence>MQPRQPGDEAKQLAELEVVRQMMTPTREVLLELHESFLKELQRGLEMHKRHGITWVPEECSMKMLDSCVSNLPTGAEVGEAYAIDFGGSTCRAVRCSLLGKGKMEIIQDKICLRSAEHRCAKGFMDKKAGGKELFDQFAMCIRGLMDRSGDLKKAEETNTPVPVGFTFSFPCAQAALNSSFLIEWTKGFETGRENPDRVEGKDVAVLLADALQRHNVPAVCKAIVNDTVGTLVSCAYQRVPGTPECRVGLIIGTGFNACYVEPEASNYGYTGTVVNMEAGNFHKDLPRNEIDVEVDEKTHNRGKQQFEKLVSGYYIGEIVRVAAVRVFGARAPEKASVRHSIHGETASTIRDDHSQDKAASIQAIKECWGVTMDLDDIKCIWEICRLVFDRSAAFAATLAVALCYRTGRLDTGSTVGIDGALYVKNQWYREAVEYYTKLVAGDAAKNIHYCIADDGSGKGAALIADVN</sequence>
<feature type="chain" id="PRO_0000197600" description="Hexokinase">
    <location>
        <begin position="1"/>
        <end position="468"/>
    </location>
</feature>
<feature type="domain" description="Hexokinase" evidence="3">
    <location>
        <begin position="10"/>
        <end position="466"/>
    </location>
</feature>
<feature type="region of interest" description="Hexokinase small subdomain" evidence="3">
    <location>
        <begin position="74"/>
        <end position="225"/>
    </location>
</feature>
<feature type="region of interest" description="Glucose-binding" evidence="2">
    <location>
        <begin position="163"/>
        <end position="189"/>
    </location>
</feature>
<feature type="region of interest" description="Hexokinase large subdomain" evidence="3">
    <location>
        <begin position="226"/>
        <end position="455"/>
    </location>
</feature>
<feature type="binding site" evidence="2">
    <location>
        <begin position="85"/>
        <end position="90"/>
    </location>
    <ligand>
        <name>ATP</name>
        <dbReference type="ChEBI" id="CHEBI:30616"/>
    </ligand>
</feature>